<feature type="chain" id="PRO_1000070158" description="Membrane protein insertase YidC">
    <location>
        <begin position="1"/>
        <end position="560"/>
    </location>
</feature>
<feature type="transmembrane region" description="Helical" evidence="1">
    <location>
        <begin position="5"/>
        <end position="25"/>
    </location>
</feature>
<feature type="transmembrane region" description="Helical" evidence="1">
    <location>
        <begin position="334"/>
        <end position="354"/>
    </location>
</feature>
<feature type="transmembrane region" description="Helical" evidence="1">
    <location>
        <begin position="357"/>
        <end position="377"/>
    </location>
</feature>
<feature type="transmembrane region" description="Helical" evidence="1">
    <location>
        <begin position="431"/>
        <end position="451"/>
    </location>
</feature>
<feature type="transmembrane region" description="Helical" evidence="1">
    <location>
        <begin position="476"/>
        <end position="496"/>
    </location>
</feature>
<feature type="transmembrane region" description="Helical" evidence="1">
    <location>
        <begin position="522"/>
        <end position="542"/>
    </location>
</feature>
<name>YIDC_RICRS</name>
<proteinExistence type="inferred from homology"/>
<sequence>MNNNIINLIAAIILSLSIIFGWQYFVVKPEQKKQQQQIAVQKAENLKKQQLKALVEPATGIVVQEESQVQRIKIESESLTGSISLKGLRFDDLILKKYKQDLSKNSPEVRLFSPANTENAYFAEVGLVSNLSSVKLPNNDTIWNSDSEILSPEKPVHLFWVNEDGVKFLVTITVDENYLFTIEQTIVNNSDKELPVQSYGLINRKYIAVEKAVNILHQGPIGCIDENLKEYSYDDIKDKKSEKFAASKVDWIGITDKYWLSSLIPDKSSNYSSNFNYALKQGIERYQVDFISPVQIIKPGKNFSIKSRIFAGAKKVDLLDKYEKQYDIKLFDRAIDFGWFYIITKPVFYAMNFFYGYVGNFGVSILIVTVIIKLLMFTLANKSYRSMKKMKNLQPEIDRIKNLYSDDKARLNQEIMALYKKEKVNPVAGCLPILVQIPVFFSIYKVLYVTIEMRQAPFYGWIKDLSAPDPTTIFNLFGLLPFAPPSFLMIGAWPILMAITMFLQQKMSPEPADPMQAQVMKFMPLIFLFMFSSFPVGLLIYWSWNNILSIIQQYYINKFN</sequence>
<comment type="function">
    <text evidence="1">Required for the insertion and/or proper folding and/or complex formation of integral membrane proteins into the membrane. Involved in integration of membrane proteins that insert both dependently and independently of the Sec translocase complex, as well as at least some lipoproteins. Aids folding of multispanning membrane proteins.</text>
</comment>
<comment type="subunit">
    <text evidence="1">Interacts with the Sec translocase complex via SecD. Specifically interacts with transmembrane segments of nascent integral membrane proteins during membrane integration.</text>
</comment>
<comment type="subcellular location">
    <subcellularLocation>
        <location evidence="1">Cell inner membrane</location>
        <topology evidence="1">Multi-pass membrane protein</topology>
    </subcellularLocation>
</comment>
<comment type="similarity">
    <text evidence="1">Belongs to the OXA1/ALB3/YidC family. Type 1 subfamily.</text>
</comment>
<reference key="1">
    <citation type="submission" date="2007-09" db="EMBL/GenBank/DDBJ databases">
        <title>Complete genome sequence of Rickettsia rickettsii.</title>
        <authorList>
            <person name="Madan A."/>
            <person name="Fahey J."/>
            <person name="Helton E."/>
            <person name="Ketteman M."/>
            <person name="Madan A."/>
            <person name="Rodrigues S."/>
            <person name="Sanchez A."/>
            <person name="Dasch G."/>
            <person name="Eremeeva M."/>
        </authorList>
    </citation>
    <scope>NUCLEOTIDE SEQUENCE [LARGE SCALE GENOMIC DNA]</scope>
    <source>
        <strain>Sheila Smith</strain>
    </source>
</reference>
<organism>
    <name type="scientific">Rickettsia rickettsii (strain Sheila Smith)</name>
    <dbReference type="NCBI Taxonomy" id="392021"/>
    <lineage>
        <taxon>Bacteria</taxon>
        <taxon>Pseudomonadati</taxon>
        <taxon>Pseudomonadota</taxon>
        <taxon>Alphaproteobacteria</taxon>
        <taxon>Rickettsiales</taxon>
        <taxon>Rickettsiaceae</taxon>
        <taxon>Rickettsieae</taxon>
        <taxon>Rickettsia</taxon>
        <taxon>spotted fever group</taxon>
    </lineage>
</organism>
<evidence type="ECO:0000255" key="1">
    <source>
        <dbReference type="HAMAP-Rule" id="MF_01810"/>
    </source>
</evidence>
<keyword id="KW-0997">Cell inner membrane</keyword>
<keyword id="KW-1003">Cell membrane</keyword>
<keyword id="KW-0143">Chaperone</keyword>
<keyword id="KW-0472">Membrane</keyword>
<keyword id="KW-0653">Protein transport</keyword>
<keyword id="KW-0812">Transmembrane</keyword>
<keyword id="KW-1133">Transmembrane helix</keyword>
<keyword id="KW-0813">Transport</keyword>
<protein>
    <recommendedName>
        <fullName evidence="1">Membrane protein insertase YidC</fullName>
    </recommendedName>
    <alternativeName>
        <fullName evidence="1">Foldase YidC</fullName>
    </alternativeName>
    <alternativeName>
        <fullName evidence="1">Membrane integrase YidC</fullName>
    </alternativeName>
    <alternativeName>
        <fullName evidence="1">Membrane protein YidC</fullName>
    </alternativeName>
</protein>
<accession>A8GQK8</accession>
<dbReference type="EMBL" id="CP000848">
    <property type="protein sequence ID" value="ABV75683.1"/>
    <property type="molecule type" value="Genomic_DNA"/>
</dbReference>
<dbReference type="RefSeq" id="WP_012150305.1">
    <property type="nucleotide sequence ID" value="NZ_CP121767.1"/>
</dbReference>
<dbReference type="SMR" id="A8GQK8"/>
<dbReference type="GeneID" id="79936875"/>
<dbReference type="KEGG" id="rri:A1G_00475"/>
<dbReference type="HOGENOM" id="CLU_016535_1_0_5"/>
<dbReference type="Proteomes" id="UP000006832">
    <property type="component" value="Chromosome"/>
</dbReference>
<dbReference type="GO" id="GO:0005886">
    <property type="term" value="C:plasma membrane"/>
    <property type="evidence" value="ECO:0007669"/>
    <property type="project" value="UniProtKB-SubCell"/>
</dbReference>
<dbReference type="GO" id="GO:0032977">
    <property type="term" value="F:membrane insertase activity"/>
    <property type="evidence" value="ECO:0007669"/>
    <property type="project" value="InterPro"/>
</dbReference>
<dbReference type="GO" id="GO:0051205">
    <property type="term" value="P:protein insertion into membrane"/>
    <property type="evidence" value="ECO:0007669"/>
    <property type="project" value="TreeGrafter"/>
</dbReference>
<dbReference type="GO" id="GO:0015031">
    <property type="term" value="P:protein transport"/>
    <property type="evidence" value="ECO:0007669"/>
    <property type="project" value="UniProtKB-KW"/>
</dbReference>
<dbReference type="CDD" id="cd20070">
    <property type="entry name" value="5TM_YidC_Alb3"/>
    <property type="match status" value="1"/>
</dbReference>
<dbReference type="CDD" id="cd19961">
    <property type="entry name" value="EcYidC-like_peri"/>
    <property type="match status" value="1"/>
</dbReference>
<dbReference type="Gene3D" id="2.70.98.90">
    <property type="match status" value="1"/>
</dbReference>
<dbReference type="HAMAP" id="MF_01810">
    <property type="entry name" value="YidC_type1"/>
    <property type="match status" value="1"/>
</dbReference>
<dbReference type="InterPro" id="IPR019998">
    <property type="entry name" value="Membr_insert_YidC"/>
</dbReference>
<dbReference type="InterPro" id="IPR028053">
    <property type="entry name" value="Membr_insert_YidC_N"/>
</dbReference>
<dbReference type="InterPro" id="IPR001708">
    <property type="entry name" value="YidC/ALB3/OXA1/COX18"/>
</dbReference>
<dbReference type="InterPro" id="IPR028055">
    <property type="entry name" value="YidC/Oxa/ALB_C"/>
</dbReference>
<dbReference type="InterPro" id="IPR047196">
    <property type="entry name" value="YidC_ALB_C"/>
</dbReference>
<dbReference type="InterPro" id="IPR038221">
    <property type="entry name" value="YidC_periplasmic_sf"/>
</dbReference>
<dbReference type="NCBIfam" id="NF002353">
    <property type="entry name" value="PRK01318.1-4"/>
    <property type="match status" value="1"/>
</dbReference>
<dbReference type="NCBIfam" id="TIGR03593">
    <property type="entry name" value="yidC_nterm"/>
    <property type="match status" value="1"/>
</dbReference>
<dbReference type="NCBIfam" id="TIGR03592">
    <property type="entry name" value="yidC_oxa1_cterm"/>
    <property type="match status" value="1"/>
</dbReference>
<dbReference type="PANTHER" id="PTHR12428:SF65">
    <property type="entry name" value="CYTOCHROME C OXIDASE ASSEMBLY PROTEIN COX18, MITOCHONDRIAL"/>
    <property type="match status" value="1"/>
</dbReference>
<dbReference type="PANTHER" id="PTHR12428">
    <property type="entry name" value="OXA1"/>
    <property type="match status" value="1"/>
</dbReference>
<dbReference type="Pfam" id="PF02096">
    <property type="entry name" value="60KD_IMP"/>
    <property type="match status" value="1"/>
</dbReference>
<dbReference type="Pfam" id="PF14849">
    <property type="entry name" value="YidC_periplas"/>
    <property type="match status" value="1"/>
</dbReference>
<dbReference type="PRINTS" id="PR00701">
    <property type="entry name" value="60KDINNERMP"/>
</dbReference>
<dbReference type="PRINTS" id="PR01900">
    <property type="entry name" value="YIDCPROTEIN"/>
</dbReference>
<gene>
    <name evidence="1" type="primary">yidC</name>
    <name type="ordered locus">A1G_00475</name>
</gene>